<comment type="similarity">
    <text evidence="1">Belongs to the bacterial ribosomal protein bL27 family.</text>
</comment>
<dbReference type="EMBL" id="AP011115">
    <property type="protein sequence ID" value="BAH49281.1"/>
    <property type="molecule type" value="Genomic_DNA"/>
</dbReference>
<dbReference type="RefSeq" id="WP_012688267.1">
    <property type="nucleotide sequence ID" value="NC_012522.1"/>
</dbReference>
<dbReference type="SMR" id="C1AVK1"/>
<dbReference type="STRING" id="632772.ROP_10340"/>
<dbReference type="KEGG" id="rop:ROP_10340"/>
<dbReference type="PATRIC" id="fig|632772.20.peg.1100"/>
<dbReference type="HOGENOM" id="CLU_095424_4_0_11"/>
<dbReference type="OrthoDB" id="9803474at2"/>
<dbReference type="Proteomes" id="UP000002212">
    <property type="component" value="Chromosome"/>
</dbReference>
<dbReference type="GO" id="GO:0022625">
    <property type="term" value="C:cytosolic large ribosomal subunit"/>
    <property type="evidence" value="ECO:0007669"/>
    <property type="project" value="TreeGrafter"/>
</dbReference>
<dbReference type="GO" id="GO:0003735">
    <property type="term" value="F:structural constituent of ribosome"/>
    <property type="evidence" value="ECO:0007669"/>
    <property type="project" value="InterPro"/>
</dbReference>
<dbReference type="GO" id="GO:0006412">
    <property type="term" value="P:translation"/>
    <property type="evidence" value="ECO:0007669"/>
    <property type="project" value="UniProtKB-UniRule"/>
</dbReference>
<dbReference type="FunFam" id="2.40.50.100:FF:000020">
    <property type="entry name" value="50S ribosomal protein L27"/>
    <property type="match status" value="1"/>
</dbReference>
<dbReference type="Gene3D" id="2.40.50.100">
    <property type="match status" value="1"/>
</dbReference>
<dbReference type="HAMAP" id="MF_00539">
    <property type="entry name" value="Ribosomal_bL27"/>
    <property type="match status" value="1"/>
</dbReference>
<dbReference type="InterPro" id="IPR001684">
    <property type="entry name" value="Ribosomal_bL27"/>
</dbReference>
<dbReference type="InterPro" id="IPR018261">
    <property type="entry name" value="Ribosomal_bL27_CS"/>
</dbReference>
<dbReference type="NCBIfam" id="TIGR00062">
    <property type="entry name" value="L27"/>
    <property type="match status" value="1"/>
</dbReference>
<dbReference type="PANTHER" id="PTHR15893:SF0">
    <property type="entry name" value="LARGE RIBOSOMAL SUBUNIT PROTEIN BL27M"/>
    <property type="match status" value="1"/>
</dbReference>
<dbReference type="PANTHER" id="PTHR15893">
    <property type="entry name" value="RIBOSOMAL PROTEIN L27"/>
    <property type="match status" value="1"/>
</dbReference>
<dbReference type="Pfam" id="PF01016">
    <property type="entry name" value="Ribosomal_L27"/>
    <property type="match status" value="1"/>
</dbReference>
<dbReference type="PRINTS" id="PR00063">
    <property type="entry name" value="RIBOSOMALL27"/>
</dbReference>
<dbReference type="SUPFAM" id="SSF110324">
    <property type="entry name" value="Ribosomal L27 protein-like"/>
    <property type="match status" value="1"/>
</dbReference>
<dbReference type="PROSITE" id="PS00831">
    <property type="entry name" value="RIBOSOMAL_L27"/>
    <property type="match status" value="1"/>
</dbReference>
<gene>
    <name evidence="1" type="primary">rpmA</name>
    <name type="ordered locus">ROP_10340</name>
</gene>
<accession>C1AVK1</accession>
<organism>
    <name type="scientific">Rhodococcus opacus (strain B4)</name>
    <dbReference type="NCBI Taxonomy" id="632772"/>
    <lineage>
        <taxon>Bacteria</taxon>
        <taxon>Bacillati</taxon>
        <taxon>Actinomycetota</taxon>
        <taxon>Actinomycetes</taxon>
        <taxon>Mycobacteriales</taxon>
        <taxon>Nocardiaceae</taxon>
        <taxon>Rhodococcus</taxon>
    </lineage>
</organism>
<proteinExistence type="inferred from homology"/>
<keyword id="KW-0687">Ribonucleoprotein</keyword>
<keyword id="KW-0689">Ribosomal protein</keyword>
<protein>
    <recommendedName>
        <fullName evidence="1">Large ribosomal subunit protein bL27</fullName>
    </recommendedName>
    <alternativeName>
        <fullName evidence="3">50S ribosomal protein L27</fullName>
    </alternativeName>
</protein>
<reference key="1">
    <citation type="submission" date="2009-03" db="EMBL/GenBank/DDBJ databases">
        <title>Comparison of the complete genome sequences of Rhodococcus erythropolis PR4 and Rhodococcus opacus B4.</title>
        <authorList>
            <person name="Takarada H."/>
            <person name="Sekine M."/>
            <person name="Hosoyama A."/>
            <person name="Yamada R."/>
            <person name="Fujisawa T."/>
            <person name="Omata S."/>
            <person name="Shimizu A."/>
            <person name="Tsukatani N."/>
            <person name="Tanikawa S."/>
            <person name="Fujita N."/>
            <person name="Harayama S."/>
        </authorList>
    </citation>
    <scope>NUCLEOTIDE SEQUENCE [LARGE SCALE GENOMIC DNA]</scope>
    <source>
        <strain>B4</strain>
    </source>
</reference>
<evidence type="ECO:0000255" key="1">
    <source>
        <dbReference type="HAMAP-Rule" id="MF_00539"/>
    </source>
</evidence>
<evidence type="ECO:0000256" key="2">
    <source>
        <dbReference type="SAM" id="MobiDB-lite"/>
    </source>
</evidence>
<evidence type="ECO:0000305" key="3"/>
<feature type="chain" id="PRO_1000195883" description="Large ribosomal subunit protein bL27">
    <location>
        <begin position="1"/>
        <end position="87"/>
    </location>
</feature>
<feature type="region of interest" description="Disordered" evidence="2">
    <location>
        <begin position="1"/>
        <end position="25"/>
    </location>
</feature>
<feature type="compositionally biased region" description="Polar residues" evidence="2">
    <location>
        <begin position="7"/>
        <end position="19"/>
    </location>
</feature>
<sequence length="87" mass="9058">MAHKKGASSSRNGRDSNAQRLGVKRFGGQSVSAGEILVRQRGTHFHPGVNVGRGGDDTLFALSAGAVEFGTKRGRKTVNIVPAAAEV</sequence>
<name>RL27_RHOOB</name>